<comment type="function">
    <text evidence="1">Required for the assembly of mature ribosomes and ribosome biogenesis. Together with EFL1, triggers the GTP-dependent release of EIF6 from 60S pre-ribosomes in the cytoplasm, thereby activating ribosomes for translation competence by allowing 80S ribosome assembly and facilitating EIF6 recycling to the nucleus, where it is required for 60S rRNA processing and nuclear export. Required for normal levels of protein synthesis. May play a role in cellular stress resistance. May play a role in cellular response to DNA damage. May play a role in cell proliferation (By similarity).</text>
</comment>
<comment type="subunit">
    <text evidence="1">Associates with the 60S ribosomal subunit.</text>
</comment>
<comment type="subcellular location">
    <subcellularLocation>
        <location evidence="1">Cytoplasm</location>
    </subcellularLocation>
    <subcellularLocation>
        <location evidence="1">Nucleus</location>
        <location evidence="1">Nucleolus</location>
    </subcellularLocation>
    <subcellularLocation>
        <location evidence="1">Nucleus</location>
        <location evidence="1">Nucleoplasm</location>
    </subcellularLocation>
    <subcellularLocation>
        <location evidence="1">Cytoplasm</location>
        <location evidence="1">Cytoskeleton</location>
        <location evidence="1">Spindle</location>
    </subcellularLocation>
    <text evidence="1">Primarily detected in the cytoplasm, and at low levels in nucleus and nucleolus. Detected at the mitotic spindle. Colocalizes with the microtubule organizing center during interphase (By similarity).</text>
</comment>
<comment type="similarity">
    <text evidence="2">Belongs to the SDO1/SBDS family.</text>
</comment>
<accession>Q5ZIY4</accession>
<evidence type="ECO:0000250" key="1"/>
<evidence type="ECO:0000305" key="2"/>
<feature type="initiator methionine" description="Removed" evidence="1">
    <location>
        <position position="1"/>
    </location>
</feature>
<feature type="chain" id="PRO_0000304734" description="Ribosome maturation protein SBDS">
    <location>
        <begin position="2"/>
        <end position="250"/>
    </location>
</feature>
<feature type="modified residue" description="N-acetylserine" evidence="1">
    <location>
        <position position="2"/>
    </location>
</feature>
<gene>
    <name type="primary">SBDS</name>
    <name type="ORF">RCJMB04_22m12</name>
</gene>
<organism>
    <name type="scientific">Gallus gallus</name>
    <name type="common">Chicken</name>
    <dbReference type="NCBI Taxonomy" id="9031"/>
    <lineage>
        <taxon>Eukaryota</taxon>
        <taxon>Metazoa</taxon>
        <taxon>Chordata</taxon>
        <taxon>Craniata</taxon>
        <taxon>Vertebrata</taxon>
        <taxon>Euteleostomi</taxon>
        <taxon>Archelosauria</taxon>
        <taxon>Archosauria</taxon>
        <taxon>Dinosauria</taxon>
        <taxon>Saurischia</taxon>
        <taxon>Theropoda</taxon>
        <taxon>Coelurosauria</taxon>
        <taxon>Aves</taxon>
        <taxon>Neognathae</taxon>
        <taxon>Galloanserae</taxon>
        <taxon>Galliformes</taxon>
        <taxon>Phasianidae</taxon>
        <taxon>Phasianinae</taxon>
        <taxon>Gallus</taxon>
    </lineage>
</organism>
<protein>
    <recommendedName>
        <fullName>Ribosome maturation protein SBDS</fullName>
    </recommendedName>
    <alternativeName>
        <fullName>Shwachman-Bodian-Diamond syndrome protein homolog</fullName>
    </alternativeName>
</protein>
<proteinExistence type="evidence at transcript level"/>
<name>SBDS_CHICK</name>
<sequence>MSIFTPTNQIRLTNVAVVRARRAGKRFEIACYRNKVMGWRSGAEKDIDEVLQTHTVFVNVSKGQVAKKEDLVRAFGTDDQTEICKVILSKGELQVSDKERQTQLEQMFRDIATIVADKCVNPETKRPYTVILIERAMKDIHYSVKPNKSTKQQALEVIRQLKETMQIERAHMRLRFILPVKEGKKLKEKLKPLIKVIENEDFHDQLEIVCLIDPGCFREIDELIRSETKGKGTLEVLSLKDVEEGDEKLE</sequence>
<dbReference type="EMBL" id="AJ720650">
    <property type="protein sequence ID" value="CAG32309.1"/>
    <property type="molecule type" value="mRNA"/>
</dbReference>
<dbReference type="RefSeq" id="NP_001006211.1">
    <property type="nucleotide sequence ID" value="NM_001006211.3"/>
</dbReference>
<dbReference type="SMR" id="Q5ZIY4"/>
<dbReference type="FunCoup" id="Q5ZIY4">
    <property type="interactions" value="1973"/>
</dbReference>
<dbReference type="STRING" id="9031.ENSGALP00000041256"/>
<dbReference type="PaxDb" id="9031-ENSGALP00000041256"/>
<dbReference type="Ensembl" id="ENSGALT00010070487.1">
    <property type="protein sequence ID" value="ENSGALP00010043178.1"/>
    <property type="gene ID" value="ENSGALG00010029169.1"/>
</dbReference>
<dbReference type="GeneID" id="417477"/>
<dbReference type="KEGG" id="gga:417477"/>
<dbReference type="CTD" id="51119"/>
<dbReference type="VEuPathDB" id="HostDB:geneid_417477"/>
<dbReference type="eggNOG" id="KOG2917">
    <property type="taxonomic scope" value="Eukaryota"/>
</dbReference>
<dbReference type="GeneTree" id="ENSGT00390000008135"/>
<dbReference type="HOGENOM" id="CLU_043216_1_1_1"/>
<dbReference type="InParanoid" id="Q5ZIY4"/>
<dbReference type="OMA" id="TIISAKC"/>
<dbReference type="OrthoDB" id="10253092at2759"/>
<dbReference type="PhylomeDB" id="Q5ZIY4"/>
<dbReference type="TreeFam" id="TF300881"/>
<dbReference type="PRO" id="PR:Q5ZIY4"/>
<dbReference type="Proteomes" id="UP000000539">
    <property type="component" value="Chromosome 19"/>
</dbReference>
<dbReference type="Bgee" id="ENSGALG00000027989">
    <property type="expression patterns" value="Expressed in muscle tissue and 13 other cell types or tissues"/>
</dbReference>
<dbReference type="GO" id="GO:0005829">
    <property type="term" value="C:cytosol"/>
    <property type="evidence" value="ECO:0007669"/>
    <property type="project" value="Ensembl"/>
</dbReference>
<dbReference type="GO" id="GO:0005730">
    <property type="term" value="C:nucleolus"/>
    <property type="evidence" value="ECO:0007669"/>
    <property type="project" value="UniProtKB-SubCell"/>
</dbReference>
<dbReference type="GO" id="GO:0005654">
    <property type="term" value="C:nucleoplasm"/>
    <property type="evidence" value="ECO:0007669"/>
    <property type="project" value="UniProtKB-SubCell"/>
</dbReference>
<dbReference type="GO" id="GO:0000922">
    <property type="term" value="C:spindle pole"/>
    <property type="evidence" value="ECO:0000250"/>
    <property type="project" value="UniProtKB"/>
</dbReference>
<dbReference type="GO" id="GO:0008017">
    <property type="term" value="F:microtubule binding"/>
    <property type="evidence" value="ECO:0007669"/>
    <property type="project" value="Ensembl"/>
</dbReference>
<dbReference type="GO" id="GO:0043022">
    <property type="term" value="F:ribosome binding"/>
    <property type="evidence" value="ECO:0000250"/>
    <property type="project" value="UniProtKB"/>
</dbReference>
<dbReference type="GO" id="GO:0019843">
    <property type="term" value="F:rRNA binding"/>
    <property type="evidence" value="ECO:0007669"/>
    <property type="project" value="Ensembl"/>
</dbReference>
<dbReference type="GO" id="GO:0048539">
    <property type="term" value="P:bone marrow development"/>
    <property type="evidence" value="ECO:0007669"/>
    <property type="project" value="Ensembl"/>
</dbReference>
<dbReference type="GO" id="GO:0030282">
    <property type="term" value="P:bone mineralization"/>
    <property type="evidence" value="ECO:0007669"/>
    <property type="project" value="Ensembl"/>
</dbReference>
<dbReference type="GO" id="GO:0042256">
    <property type="term" value="P:cytosolic ribosome assembly"/>
    <property type="evidence" value="ECO:0000250"/>
    <property type="project" value="UniProtKB"/>
</dbReference>
<dbReference type="GO" id="GO:0002244">
    <property type="term" value="P:hematopoietic progenitor cell differentiation"/>
    <property type="evidence" value="ECO:0000250"/>
    <property type="project" value="UniProtKB"/>
</dbReference>
<dbReference type="GO" id="GO:0030595">
    <property type="term" value="P:leukocyte chemotaxis"/>
    <property type="evidence" value="ECO:0007669"/>
    <property type="project" value="Ensembl"/>
</dbReference>
<dbReference type="GO" id="GO:0007052">
    <property type="term" value="P:mitotic spindle organization"/>
    <property type="evidence" value="ECO:0007669"/>
    <property type="project" value="Ensembl"/>
</dbReference>
<dbReference type="GO" id="GO:0006364">
    <property type="term" value="P:rRNA processing"/>
    <property type="evidence" value="ECO:0007669"/>
    <property type="project" value="Ensembl"/>
</dbReference>
<dbReference type="FunFam" id="3.30.70.240:FF:000009">
    <property type="entry name" value="SBDS ribosome maturation factor"/>
    <property type="match status" value="1"/>
</dbReference>
<dbReference type="FunFam" id="1.10.10.900:FF:000001">
    <property type="entry name" value="SBDS, ribosome maturation factor"/>
    <property type="match status" value="1"/>
</dbReference>
<dbReference type="FunFam" id="3.30.1250.10:FF:000001">
    <property type="entry name" value="SBDS, ribosome maturation factor"/>
    <property type="match status" value="1"/>
</dbReference>
<dbReference type="Gene3D" id="3.30.70.240">
    <property type="match status" value="1"/>
</dbReference>
<dbReference type="Gene3D" id="3.30.1250.10">
    <property type="entry name" value="Ribosome maturation protein SBDS, N-terminal domain"/>
    <property type="match status" value="1"/>
</dbReference>
<dbReference type="Gene3D" id="1.10.10.900">
    <property type="entry name" value="SBDS protein C-terminal domain, subdomain 1"/>
    <property type="match status" value="1"/>
</dbReference>
<dbReference type="InterPro" id="IPR018023">
    <property type="entry name" value="Ribosome_mat_SBDS_CS"/>
</dbReference>
<dbReference type="InterPro" id="IPR036786">
    <property type="entry name" value="Ribosome_mat_SBDS_N_sf"/>
</dbReference>
<dbReference type="InterPro" id="IPR002140">
    <property type="entry name" value="Sdo1/SBDS"/>
</dbReference>
<dbReference type="InterPro" id="IPR039100">
    <property type="entry name" value="Sdo1/SBDS-like"/>
</dbReference>
<dbReference type="InterPro" id="IPR046928">
    <property type="entry name" value="SDO1/SBDS_C"/>
</dbReference>
<dbReference type="InterPro" id="IPR018978">
    <property type="entry name" value="SDO1/SBDS_central"/>
</dbReference>
<dbReference type="InterPro" id="IPR037188">
    <property type="entry name" value="Sdo1/SBDS_central_sf"/>
</dbReference>
<dbReference type="InterPro" id="IPR019783">
    <property type="entry name" value="SDO1/SBDS_N"/>
</dbReference>
<dbReference type="NCBIfam" id="TIGR00291">
    <property type="entry name" value="RNA_SBDS"/>
    <property type="match status" value="1"/>
</dbReference>
<dbReference type="PANTHER" id="PTHR10927">
    <property type="entry name" value="RIBOSOME MATURATION PROTEIN SBDS"/>
    <property type="match status" value="1"/>
</dbReference>
<dbReference type="PANTHER" id="PTHR10927:SF1">
    <property type="entry name" value="RIBOSOME MATURATION PROTEIN SBDS"/>
    <property type="match status" value="1"/>
</dbReference>
<dbReference type="Pfam" id="PF20268">
    <property type="entry name" value="SBDS_C"/>
    <property type="match status" value="1"/>
</dbReference>
<dbReference type="Pfam" id="PF09377">
    <property type="entry name" value="SBDS_domain_II"/>
    <property type="match status" value="1"/>
</dbReference>
<dbReference type="Pfam" id="PF01172">
    <property type="entry name" value="SBDS_N"/>
    <property type="match status" value="1"/>
</dbReference>
<dbReference type="SUPFAM" id="SSF89895">
    <property type="entry name" value="FYSH domain"/>
    <property type="match status" value="1"/>
</dbReference>
<dbReference type="SUPFAM" id="SSF109728">
    <property type="entry name" value="Hypothetical protein AF0491, middle domain"/>
    <property type="match status" value="1"/>
</dbReference>
<dbReference type="PROSITE" id="PS01267">
    <property type="entry name" value="UPF0023"/>
    <property type="match status" value="1"/>
</dbReference>
<reference key="1">
    <citation type="journal article" date="2005" name="BMC Genomics">
        <title>Characterization of 954 bovine full-CDS cDNA sequences.</title>
        <authorList>
            <person name="Harhay G.P."/>
            <person name="Sonstegard T.S."/>
            <person name="Keele J.W."/>
            <person name="Heaton M.P."/>
            <person name="Clawson M.L."/>
            <person name="Snelling W.M."/>
            <person name="Wiedmann R.T."/>
            <person name="Van Tassell C.P."/>
            <person name="Smith T.P.L."/>
        </authorList>
    </citation>
    <scope>NUCLEOTIDE SEQUENCE [LARGE SCALE MRNA]</scope>
    <source>
        <strain>CB</strain>
        <tissue>Bursa of Fabricius</tissue>
    </source>
</reference>
<keyword id="KW-0007">Acetylation</keyword>
<keyword id="KW-0963">Cytoplasm</keyword>
<keyword id="KW-0206">Cytoskeleton</keyword>
<keyword id="KW-0539">Nucleus</keyword>
<keyword id="KW-1185">Reference proteome</keyword>
<keyword id="KW-0690">Ribosome biogenesis</keyword>